<name>FLGH_THIDA</name>
<evidence type="ECO:0000255" key="1">
    <source>
        <dbReference type="HAMAP-Rule" id="MF_00415"/>
    </source>
</evidence>
<proteinExistence type="inferred from homology"/>
<protein>
    <recommendedName>
        <fullName evidence="1">Flagellar L-ring protein</fullName>
    </recommendedName>
    <alternativeName>
        <fullName evidence="1">Basal body L-ring protein</fullName>
    </alternativeName>
</protein>
<sequence length="222" mass="23434">MKTTRAIAMLGLLLGLAACGTTPSTIVERPTTARPQAPAAVPATNGAIYQAATYRPLFEDRRARHVGDVLTIVINERTRAGKEASSSASKTSAVDASVGGVAKLPLKMFQGLGINAEASAEYEDESALDSSNTFSGNVTVTVIEVLPNGNLVVAGEKQIGLDKGTEYIRLSGVVQPDTIQAGNTVSSAKVADARIEYRSSAKFDKAEVMNWLGRFFLSFIPL</sequence>
<keyword id="KW-0975">Bacterial flagellum</keyword>
<keyword id="KW-0998">Cell outer membrane</keyword>
<keyword id="KW-0449">Lipoprotein</keyword>
<keyword id="KW-0472">Membrane</keyword>
<keyword id="KW-0564">Palmitate</keyword>
<keyword id="KW-1185">Reference proteome</keyword>
<keyword id="KW-0732">Signal</keyword>
<accession>Q3SIE4</accession>
<comment type="function">
    <text evidence="1">Assembles around the rod to form the L-ring and probably protects the motor/basal body from shearing forces during rotation.</text>
</comment>
<comment type="subunit">
    <text evidence="1">The basal body constitutes a major portion of the flagellar organelle and consists of four rings (L,P,S, and M) mounted on a central rod.</text>
</comment>
<comment type="subcellular location">
    <subcellularLocation>
        <location evidence="1">Cell outer membrane</location>
        <topology evidence="1">Lipid-anchor</topology>
    </subcellularLocation>
    <subcellularLocation>
        <location evidence="1">Bacterial flagellum basal body</location>
    </subcellularLocation>
</comment>
<comment type="similarity">
    <text evidence="1">Belongs to the FlgH family.</text>
</comment>
<feature type="signal peptide" evidence="1">
    <location>
        <begin position="1"/>
        <end position="18"/>
    </location>
</feature>
<feature type="chain" id="PRO_0000236838" description="Flagellar L-ring protein">
    <location>
        <begin position="19"/>
        <end position="222"/>
    </location>
</feature>
<feature type="lipid moiety-binding region" description="N-palmitoyl cysteine" evidence="1">
    <location>
        <position position="19"/>
    </location>
</feature>
<feature type="lipid moiety-binding region" description="S-diacylglycerol cysteine" evidence="1">
    <location>
        <position position="19"/>
    </location>
</feature>
<gene>
    <name evidence="1" type="primary">flgH</name>
    <name type="ordered locus">Tbd_1631</name>
</gene>
<organism>
    <name type="scientific">Thiobacillus denitrificans (strain ATCC 25259 / T1)</name>
    <dbReference type="NCBI Taxonomy" id="292415"/>
    <lineage>
        <taxon>Bacteria</taxon>
        <taxon>Pseudomonadati</taxon>
        <taxon>Pseudomonadota</taxon>
        <taxon>Betaproteobacteria</taxon>
        <taxon>Nitrosomonadales</taxon>
        <taxon>Thiobacillaceae</taxon>
        <taxon>Thiobacillus</taxon>
    </lineage>
</organism>
<dbReference type="EMBL" id="CP000116">
    <property type="protein sequence ID" value="AAZ97584.1"/>
    <property type="molecule type" value="Genomic_DNA"/>
</dbReference>
<dbReference type="RefSeq" id="WP_011312143.1">
    <property type="nucleotide sequence ID" value="NC_007404.1"/>
</dbReference>
<dbReference type="SMR" id="Q3SIE4"/>
<dbReference type="STRING" id="292415.Tbd_1631"/>
<dbReference type="KEGG" id="tbd:Tbd_1631"/>
<dbReference type="eggNOG" id="COG2063">
    <property type="taxonomic scope" value="Bacteria"/>
</dbReference>
<dbReference type="HOGENOM" id="CLU_069313_0_0_4"/>
<dbReference type="OrthoDB" id="9789463at2"/>
<dbReference type="Proteomes" id="UP000008291">
    <property type="component" value="Chromosome"/>
</dbReference>
<dbReference type="GO" id="GO:0009427">
    <property type="term" value="C:bacterial-type flagellum basal body, distal rod, L ring"/>
    <property type="evidence" value="ECO:0007669"/>
    <property type="project" value="InterPro"/>
</dbReference>
<dbReference type="GO" id="GO:0009279">
    <property type="term" value="C:cell outer membrane"/>
    <property type="evidence" value="ECO:0007669"/>
    <property type="project" value="UniProtKB-SubCell"/>
</dbReference>
<dbReference type="GO" id="GO:0003774">
    <property type="term" value="F:cytoskeletal motor activity"/>
    <property type="evidence" value="ECO:0007669"/>
    <property type="project" value="InterPro"/>
</dbReference>
<dbReference type="GO" id="GO:0071973">
    <property type="term" value="P:bacterial-type flagellum-dependent cell motility"/>
    <property type="evidence" value="ECO:0007669"/>
    <property type="project" value="InterPro"/>
</dbReference>
<dbReference type="HAMAP" id="MF_00415">
    <property type="entry name" value="FlgH"/>
    <property type="match status" value="1"/>
</dbReference>
<dbReference type="InterPro" id="IPR000527">
    <property type="entry name" value="Flag_Lring"/>
</dbReference>
<dbReference type="PANTHER" id="PTHR34933">
    <property type="entry name" value="FLAGELLAR L-RING PROTEIN"/>
    <property type="match status" value="1"/>
</dbReference>
<dbReference type="PANTHER" id="PTHR34933:SF3">
    <property type="entry name" value="FLAGELLAR L-RING PROTEIN"/>
    <property type="match status" value="1"/>
</dbReference>
<dbReference type="Pfam" id="PF02107">
    <property type="entry name" value="FlgH"/>
    <property type="match status" value="1"/>
</dbReference>
<dbReference type="PRINTS" id="PR01008">
    <property type="entry name" value="FLGLRINGFLGH"/>
</dbReference>
<dbReference type="PROSITE" id="PS51257">
    <property type="entry name" value="PROKAR_LIPOPROTEIN"/>
    <property type="match status" value="1"/>
</dbReference>
<reference key="1">
    <citation type="journal article" date="2006" name="J. Bacteriol.">
        <title>The genome sequence of the obligately chemolithoautotrophic, facultatively anaerobic bacterium Thiobacillus denitrificans.</title>
        <authorList>
            <person name="Beller H.R."/>
            <person name="Chain P.S."/>
            <person name="Letain T.E."/>
            <person name="Chakicherla A."/>
            <person name="Larimer F.W."/>
            <person name="Richardson P.M."/>
            <person name="Coleman M.A."/>
            <person name="Wood A.P."/>
            <person name="Kelly D.P."/>
        </authorList>
    </citation>
    <scope>NUCLEOTIDE SEQUENCE [LARGE SCALE GENOMIC DNA]</scope>
    <source>
        <strain>ATCC 25259 / T1</strain>
    </source>
</reference>